<proteinExistence type="inferred from homology"/>
<feature type="chain" id="PRO_0000229551" description="Small ribosomal subunit protein bS6">
    <location>
        <begin position="1"/>
        <end position="241"/>
    </location>
</feature>
<feature type="region of interest" description="Disordered" evidence="2">
    <location>
        <begin position="97"/>
        <end position="241"/>
    </location>
</feature>
<feature type="compositionally biased region" description="Basic residues" evidence="2">
    <location>
        <begin position="97"/>
        <end position="108"/>
    </location>
</feature>
<feature type="compositionally biased region" description="Basic and acidic residues" evidence="2">
    <location>
        <begin position="109"/>
        <end position="118"/>
    </location>
</feature>
<feature type="compositionally biased region" description="Low complexity" evidence="2">
    <location>
        <begin position="130"/>
        <end position="151"/>
    </location>
</feature>
<feature type="compositionally biased region" description="Low complexity" evidence="2">
    <location>
        <begin position="161"/>
        <end position="182"/>
    </location>
</feature>
<feature type="compositionally biased region" description="Polar residues" evidence="2">
    <location>
        <begin position="189"/>
        <end position="202"/>
    </location>
</feature>
<sequence>MPKYEIMTILDPKAEMAIIDNLLKTVFGDNSTEKLRKLETTNLAYPIRKSKIAQYFLVDLNAPTNLIEEFVRRANITREIWRYLIVNLDSEKGLNKKPKIRERNRKYTPRRDRFEKPNFRGNPKSRFDQQDQQATKNQQNFQQNQQNQTSQYRENSRQNQDDFQQVSSNQQNFGQNQQNQSGYHRENNRQNQENIHQNSKNHQNQTSQTQRNRRQYQPIKNPKFNQKEKENYNNKKPQSSN</sequence>
<organism>
    <name type="scientific">Mesomycoplasma hyopneumoniae (strain 232)</name>
    <name type="common">Mycoplasma hyopneumoniae</name>
    <dbReference type="NCBI Taxonomy" id="295358"/>
    <lineage>
        <taxon>Bacteria</taxon>
        <taxon>Bacillati</taxon>
        <taxon>Mycoplasmatota</taxon>
        <taxon>Mycoplasmoidales</taxon>
        <taxon>Metamycoplasmataceae</taxon>
        <taxon>Mesomycoplasma</taxon>
    </lineage>
</organism>
<reference key="1">
    <citation type="journal article" date="2004" name="J. Bacteriol.">
        <title>The genome sequence of Mycoplasma hyopneumoniae strain 232, the agent of swine mycoplasmosis.</title>
        <authorList>
            <person name="Minion F.C."/>
            <person name="Lefkowitz E.J."/>
            <person name="Madsen M.L."/>
            <person name="Cleary B.J."/>
            <person name="Swartzell S.M."/>
            <person name="Mahairas G.G."/>
        </authorList>
    </citation>
    <scope>NUCLEOTIDE SEQUENCE [LARGE SCALE GENOMIC DNA]</scope>
    <source>
        <strain>232</strain>
    </source>
</reference>
<dbReference type="EMBL" id="AE017332">
    <property type="protein sequence ID" value="AAV27820.1"/>
    <property type="molecule type" value="Genomic_DNA"/>
</dbReference>
<dbReference type="RefSeq" id="WP_011206143.1">
    <property type="nucleotide sequence ID" value="NC_006360.1"/>
</dbReference>
<dbReference type="SMR" id="Q600Z6"/>
<dbReference type="KEGG" id="mhy:mhp307"/>
<dbReference type="eggNOG" id="COG0360">
    <property type="taxonomic scope" value="Bacteria"/>
</dbReference>
<dbReference type="HOGENOM" id="CLU_1150863_0_0_14"/>
<dbReference type="PhylomeDB" id="Q600Z6"/>
<dbReference type="Proteomes" id="UP000006822">
    <property type="component" value="Chromosome"/>
</dbReference>
<dbReference type="GO" id="GO:1990904">
    <property type="term" value="C:ribonucleoprotein complex"/>
    <property type="evidence" value="ECO:0007669"/>
    <property type="project" value="UniProtKB-KW"/>
</dbReference>
<dbReference type="GO" id="GO:0005840">
    <property type="term" value="C:ribosome"/>
    <property type="evidence" value="ECO:0007669"/>
    <property type="project" value="UniProtKB-KW"/>
</dbReference>
<dbReference type="GO" id="GO:0019843">
    <property type="term" value="F:rRNA binding"/>
    <property type="evidence" value="ECO:0007669"/>
    <property type="project" value="UniProtKB-UniRule"/>
</dbReference>
<dbReference type="GO" id="GO:0003735">
    <property type="term" value="F:structural constituent of ribosome"/>
    <property type="evidence" value="ECO:0007669"/>
    <property type="project" value="InterPro"/>
</dbReference>
<dbReference type="GO" id="GO:0006412">
    <property type="term" value="P:translation"/>
    <property type="evidence" value="ECO:0007669"/>
    <property type="project" value="UniProtKB-UniRule"/>
</dbReference>
<dbReference type="CDD" id="cd00473">
    <property type="entry name" value="bS6"/>
    <property type="match status" value="1"/>
</dbReference>
<dbReference type="Gene3D" id="3.30.70.60">
    <property type="match status" value="1"/>
</dbReference>
<dbReference type="HAMAP" id="MF_00360">
    <property type="entry name" value="Ribosomal_bS6"/>
    <property type="match status" value="1"/>
</dbReference>
<dbReference type="InterPro" id="IPR000529">
    <property type="entry name" value="Ribosomal_bS6"/>
</dbReference>
<dbReference type="InterPro" id="IPR035980">
    <property type="entry name" value="Ribosomal_bS6_sf"/>
</dbReference>
<dbReference type="InterPro" id="IPR020814">
    <property type="entry name" value="Ribosomal_S6_plastid/chlpt"/>
</dbReference>
<dbReference type="InterPro" id="IPR014717">
    <property type="entry name" value="Transl_elong_EF1B/ribsomal_bS6"/>
</dbReference>
<dbReference type="NCBIfam" id="TIGR00166">
    <property type="entry name" value="S6"/>
    <property type="match status" value="1"/>
</dbReference>
<dbReference type="Pfam" id="PF01250">
    <property type="entry name" value="Ribosomal_S6"/>
    <property type="match status" value="1"/>
</dbReference>
<dbReference type="SUPFAM" id="SSF54995">
    <property type="entry name" value="Ribosomal protein S6"/>
    <property type="match status" value="1"/>
</dbReference>
<gene>
    <name evidence="1" type="primary">rpsF</name>
    <name type="ordered locus">mhp307</name>
</gene>
<keyword id="KW-0687">Ribonucleoprotein</keyword>
<keyword id="KW-0689">Ribosomal protein</keyword>
<keyword id="KW-0694">RNA-binding</keyword>
<keyword id="KW-0699">rRNA-binding</keyword>
<comment type="function">
    <text evidence="1">Binds together with bS18 to 16S ribosomal RNA.</text>
</comment>
<comment type="similarity">
    <text evidence="1">Belongs to the bacterial ribosomal protein bS6 family.</text>
</comment>
<protein>
    <recommendedName>
        <fullName evidence="1">Small ribosomal subunit protein bS6</fullName>
    </recommendedName>
    <alternativeName>
        <fullName evidence="3">30S ribosomal protein S6</fullName>
    </alternativeName>
</protein>
<name>RS6_MESH2</name>
<evidence type="ECO:0000255" key="1">
    <source>
        <dbReference type="HAMAP-Rule" id="MF_00360"/>
    </source>
</evidence>
<evidence type="ECO:0000256" key="2">
    <source>
        <dbReference type="SAM" id="MobiDB-lite"/>
    </source>
</evidence>
<evidence type="ECO:0000305" key="3"/>
<accession>Q600Z6</accession>